<gene>
    <name type="primary">EYA1</name>
</gene>
<comment type="function">
    <text evidence="2 3">Functions both as protein phosphatase and as transcriptional coactivator for SIX1, and probably also for other transcription factors of this family. Tyrosine phosphatase that dephosphorylates 'Tyr-142' of histone H2AX (H2AXY142ph) and promotes efficient DNA repair via the recruitment of DNA repair complexes containing MDC1. 'Tyr-142' phosphorylation of histone H2AX plays a central role in DNA repair and acts as a mark that distinguishes between apoptotic and repair responses to genotoxic stress. Its function as histone phosphatase may contribute to its function in transcription regulation during organogenesis. Also has phosphatase activity with proteins phosphorylated on Ser and Thr residues (in vitro). Required for normal embryonic development of the skeleton, kidneys and ears (By similarity).</text>
</comment>
<comment type="catalytic activity">
    <reaction evidence="3">
        <text>O-phospho-L-tyrosyl-[protein] + H2O = L-tyrosyl-[protein] + phosphate</text>
        <dbReference type="Rhea" id="RHEA:10684"/>
        <dbReference type="Rhea" id="RHEA-COMP:10136"/>
        <dbReference type="Rhea" id="RHEA-COMP:20101"/>
        <dbReference type="ChEBI" id="CHEBI:15377"/>
        <dbReference type="ChEBI" id="CHEBI:43474"/>
        <dbReference type="ChEBI" id="CHEBI:46858"/>
        <dbReference type="ChEBI" id="CHEBI:61978"/>
        <dbReference type="EC" id="3.1.3.48"/>
    </reaction>
</comment>
<comment type="catalytic activity">
    <reaction evidence="3">
        <text>O-phospho-L-seryl-[protein] + H2O = L-seryl-[protein] + phosphate</text>
        <dbReference type="Rhea" id="RHEA:20629"/>
        <dbReference type="Rhea" id="RHEA-COMP:9863"/>
        <dbReference type="Rhea" id="RHEA-COMP:11604"/>
        <dbReference type="ChEBI" id="CHEBI:15377"/>
        <dbReference type="ChEBI" id="CHEBI:29999"/>
        <dbReference type="ChEBI" id="CHEBI:43474"/>
        <dbReference type="ChEBI" id="CHEBI:83421"/>
        <dbReference type="EC" id="3.1.3.16"/>
    </reaction>
</comment>
<comment type="catalytic activity">
    <reaction evidence="3">
        <text>O-phospho-L-threonyl-[protein] + H2O = L-threonyl-[protein] + phosphate</text>
        <dbReference type="Rhea" id="RHEA:47004"/>
        <dbReference type="Rhea" id="RHEA-COMP:11060"/>
        <dbReference type="Rhea" id="RHEA-COMP:11605"/>
        <dbReference type="ChEBI" id="CHEBI:15377"/>
        <dbReference type="ChEBI" id="CHEBI:30013"/>
        <dbReference type="ChEBI" id="CHEBI:43474"/>
        <dbReference type="ChEBI" id="CHEBI:61977"/>
        <dbReference type="EC" id="3.1.3.16"/>
    </reaction>
</comment>
<comment type="cofactor">
    <cofactor evidence="1">
        <name>Mg(2+)</name>
        <dbReference type="ChEBI" id="CHEBI:18420"/>
    </cofactor>
    <text evidence="1">Binds 1 Mg(2+) ion per subunit.</text>
</comment>
<comment type="subcellular location">
    <subcellularLocation>
        <location evidence="3">Cytoplasm</location>
    </subcellularLocation>
    <subcellularLocation>
        <location evidence="3">Nucleus</location>
    </subcellularLocation>
    <text evidence="3">Localizes at sites of DNA damage at double-strand breaks (DSBs).</text>
</comment>
<comment type="similarity">
    <text evidence="4">Belongs to the HAD-like hydrolase superfamily. EYA family.</text>
</comment>
<proteinExistence type="evidence at transcript level"/>
<protein>
    <recommendedName>
        <fullName evidence="4">Protein phosphatase EYA1</fullName>
        <ecNumber>3.1.3.16</ecNumber>
        <ecNumber>3.1.3.48</ecNumber>
    </recommendedName>
    <alternativeName>
        <fullName>Eyes absent homolog 1</fullName>
    </alternativeName>
</protein>
<evidence type="ECO:0000250" key="1">
    <source>
        <dbReference type="UniProtKB" id="O00167"/>
    </source>
</evidence>
<evidence type="ECO:0000250" key="2">
    <source>
        <dbReference type="UniProtKB" id="P97767"/>
    </source>
</evidence>
<evidence type="ECO:0000250" key="3">
    <source>
        <dbReference type="UniProtKB" id="Q99502"/>
    </source>
</evidence>
<evidence type="ECO:0000305" key="4"/>
<keyword id="KW-0010">Activator</keyword>
<keyword id="KW-0156">Chromatin regulator</keyword>
<keyword id="KW-0963">Cytoplasm</keyword>
<keyword id="KW-0217">Developmental protein</keyword>
<keyword id="KW-0227">DNA damage</keyword>
<keyword id="KW-0234">DNA repair</keyword>
<keyword id="KW-0378">Hydrolase</keyword>
<keyword id="KW-0460">Magnesium</keyword>
<keyword id="KW-0539">Nucleus</keyword>
<keyword id="KW-0904">Protein phosphatase</keyword>
<keyword id="KW-1185">Reference proteome</keyword>
<keyword id="KW-0804">Transcription</keyword>
<keyword id="KW-0805">Transcription regulation</keyword>
<accession>Q9YHA0</accession>
<name>EYA1_CHICK</name>
<reference key="1">
    <citation type="journal article" date="1999" name="Hum. Mol. Genet.">
        <title>EYA4, a novel vertebrate gene related to Drosophila eyes absent.</title>
        <authorList>
            <person name="Borsani G."/>
            <person name="DeGrandi A."/>
            <person name="Ballabio A."/>
            <person name="Bulfone A."/>
            <person name="Bernard L."/>
            <person name="Banfi S."/>
            <person name="Gattuso C."/>
            <person name="Mariani M."/>
            <person name="Dixon M."/>
            <person name="Donnai D."/>
            <person name="Metcalfe K."/>
            <person name="Winter R."/>
            <person name="Robertson M."/>
            <person name="Axton R."/>
            <person name="Brown A."/>
            <person name="van Heyningen V."/>
            <person name="Hanson I."/>
        </authorList>
    </citation>
    <scope>NUCLEOTIDE SEQUENCE [MRNA]</scope>
    <source>
        <tissue>Embryo</tissue>
    </source>
</reference>
<sequence length="119" mass="13549">RKLAFRYRRVKEIYNTYKNNVGGLLGPAKREAWLQLRAEIEALTDSWLTLALKALTLIHSRTNCVNILVTTTQLIPALAKVLLYGLGVVFPIENIYSATKIGKESCFERIIQRFGRKVV</sequence>
<organism>
    <name type="scientific">Gallus gallus</name>
    <name type="common">Chicken</name>
    <dbReference type="NCBI Taxonomy" id="9031"/>
    <lineage>
        <taxon>Eukaryota</taxon>
        <taxon>Metazoa</taxon>
        <taxon>Chordata</taxon>
        <taxon>Craniata</taxon>
        <taxon>Vertebrata</taxon>
        <taxon>Euteleostomi</taxon>
        <taxon>Archelosauria</taxon>
        <taxon>Archosauria</taxon>
        <taxon>Dinosauria</taxon>
        <taxon>Saurischia</taxon>
        <taxon>Theropoda</taxon>
        <taxon>Coelurosauria</taxon>
        <taxon>Aves</taxon>
        <taxon>Neognathae</taxon>
        <taxon>Galloanserae</taxon>
        <taxon>Galliformes</taxon>
        <taxon>Phasianidae</taxon>
        <taxon>Phasianinae</taxon>
        <taxon>Gallus</taxon>
    </lineage>
</organism>
<feature type="chain" id="PRO_0000218645" description="Protein phosphatase EYA1">
    <location>
        <begin position="1" status="less than"/>
        <end position="119" status="greater than"/>
    </location>
</feature>
<feature type="non-terminal residue">
    <location>
        <position position="1"/>
    </location>
</feature>
<feature type="non-terminal residue">
    <location>
        <position position="119"/>
    </location>
</feature>
<dbReference type="EC" id="3.1.3.16"/>
<dbReference type="EC" id="3.1.3.48"/>
<dbReference type="EMBL" id="AJ008002">
    <property type="protein sequence ID" value="CAA07822.1"/>
    <property type="molecule type" value="mRNA"/>
</dbReference>
<dbReference type="SMR" id="Q9YHA0"/>
<dbReference type="FunCoup" id="Q9YHA0">
    <property type="interactions" value="9"/>
</dbReference>
<dbReference type="STRING" id="9031.ENSGALP00000051963"/>
<dbReference type="PaxDb" id="9031-ENSGALP00000025135"/>
<dbReference type="VEuPathDB" id="HostDB:geneid_395718"/>
<dbReference type="eggNOG" id="KOG3107">
    <property type="taxonomic scope" value="Eukaryota"/>
</dbReference>
<dbReference type="HOGENOM" id="CLU_021184_2_1_1"/>
<dbReference type="InParanoid" id="Q9YHA0"/>
<dbReference type="OrthoDB" id="167668at2759"/>
<dbReference type="PhylomeDB" id="Q9YHA0"/>
<dbReference type="Proteomes" id="UP000000539">
    <property type="component" value="Unassembled WGS sequence"/>
</dbReference>
<dbReference type="GO" id="GO:0005737">
    <property type="term" value="C:cytoplasm"/>
    <property type="evidence" value="ECO:0007669"/>
    <property type="project" value="UniProtKB-SubCell"/>
</dbReference>
<dbReference type="GO" id="GO:0005634">
    <property type="term" value="C:nucleus"/>
    <property type="evidence" value="ECO:0000250"/>
    <property type="project" value="UniProtKB"/>
</dbReference>
<dbReference type="GO" id="GO:0140793">
    <property type="term" value="F:histone H2AXY142 phosphatase activity"/>
    <property type="evidence" value="ECO:0000250"/>
    <property type="project" value="UniProtKB"/>
</dbReference>
<dbReference type="GO" id="GO:0004722">
    <property type="term" value="F:protein serine/threonine phosphatase activity"/>
    <property type="evidence" value="ECO:0007669"/>
    <property type="project" value="UniProtKB-EC"/>
</dbReference>
<dbReference type="GO" id="GO:0004725">
    <property type="term" value="F:protein tyrosine phosphatase activity"/>
    <property type="evidence" value="ECO:0007669"/>
    <property type="project" value="UniProtKB-EC"/>
</dbReference>
<dbReference type="GO" id="GO:0006302">
    <property type="term" value="P:double-strand break repair"/>
    <property type="evidence" value="ECO:0000250"/>
    <property type="project" value="UniProtKB"/>
</dbReference>
<dbReference type="GO" id="GO:0045739">
    <property type="term" value="P:positive regulation of DNA repair"/>
    <property type="evidence" value="ECO:0000250"/>
    <property type="project" value="UniProtKB"/>
</dbReference>
<dbReference type="GO" id="GO:0016925">
    <property type="term" value="P:protein sumoylation"/>
    <property type="evidence" value="ECO:0000250"/>
    <property type="project" value="UniProtKB"/>
</dbReference>
<dbReference type="GO" id="GO:0010212">
    <property type="term" value="P:response to ionizing radiation"/>
    <property type="evidence" value="ECO:0000250"/>
    <property type="project" value="UniProtKB"/>
</dbReference>
<dbReference type="FunFam" id="3.40.50.12350:FF:000006">
    <property type="entry name" value="Eyes absent homolog 4"/>
    <property type="match status" value="1"/>
</dbReference>
<dbReference type="Gene3D" id="3.40.50.12350">
    <property type="match status" value="1"/>
</dbReference>
<dbReference type="InterPro" id="IPR028472">
    <property type="entry name" value="EYA"/>
</dbReference>
<dbReference type="InterPro" id="IPR038102">
    <property type="entry name" value="EYA_dom_sf"/>
</dbReference>
<dbReference type="PANTHER" id="PTHR10190">
    <property type="entry name" value="EYES ABSENT"/>
    <property type="match status" value="1"/>
</dbReference>
<dbReference type="PANTHER" id="PTHR10190:SF11">
    <property type="entry name" value="EYES ABSENT HOMOLOG 1"/>
    <property type="match status" value="1"/>
</dbReference>